<feature type="chain" id="PRO_0000144362" description="ATP synthase subunit alpha">
    <location>
        <begin position="1"/>
        <end position="503"/>
    </location>
</feature>
<feature type="binding site" evidence="2">
    <location>
        <begin position="170"/>
        <end position="177"/>
    </location>
    <ligand>
        <name>ATP</name>
        <dbReference type="ChEBI" id="CHEBI:30616"/>
    </ligand>
</feature>
<feature type="site" description="Required for activity" evidence="2">
    <location>
        <position position="363"/>
    </location>
</feature>
<evidence type="ECO:0000250" key="1"/>
<evidence type="ECO:0000255" key="2">
    <source>
        <dbReference type="HAMAP-Rule" id="MF_01346"/>
    </source>
</evidence>
<dbReference type="EC" id="7.1.2.2" evidence="2"/>
<dbReference type="EMBL" id="X58128">
    <property type="protein sequence ID" value="CAA41135.1"/>
    <property type="molecule type" value="Genomic_DNA"/>
</dbReference>
<dbReference type="EMBL" id="BA000022">
    <property type="protein sequence ID" value="BAA16735.1"/>
    <property type="molecule type" value="Genomic_DNA"/>
</dbReference>
<dbReference type="PIR" id="S17751">
    <property type="entry name" value="PWYBA"/>
</dbReference>
<dbReference type="SMR" id="P27179"/>
<dbReference type="FunCoup" id="P27179">
    <property type="interactions" value="440"/>
</dbReference>
<dbReference type="IntAct" id="P27179">
    <property type="interactions" value="7"/>
</dbReference>
<dbReference type="STRING" id="1148.gene:10497590"/>
<dbReference type="PaxDb" id="1148-1651808"/>
<dbReference type="EnsemblBacteria" id="BAA16735">
    <property type="protein sequence ID" value="BAA16735"/>
    <property type="gene ID" value="BAA16735"/>
</dbReference>
<dbReference type="KEGG" id="syn:sll1326"/>
<dbReference type="eggNOG" id="COG0056">
    <property type="taxonomic scope" value="Bacteria"/>
</dbReference>
<dbReference type="InParanoid" id="P27179"/>
<dbReference type="PhylomeDB" id="P27179"/>
<dbReference type="Proteomes" id="UP000001425">
    <property type="component" value="Chromosome"/>
</dbReference>
<dbReference type="GO" id="GO:0005886">
    <property type="term" value="C:plasma membrane"/>
    <property type="evidence" value="ECO:0000314"/>
    <property type="project" value="UniProtKB"/>
</dbReference>
<dbReference type="GO" id="GO:0031676">
    <property type="term" value="C:plasma membrane-derived thylakoid membrane"/>
    <property type="evidence" value="ECO:0007669"/>
    <property type="project" value="UniProtKB-SubCell"/>
</dbReference>
<dbReference type="GO" id="GO:0045259">
    <property type="term" value="C:proton-transporting ATP synthase complex"/>
    <property type="evidence" value="ECO:0000314"/>
    <property type="project" value="UniProtKB"/>
</dbReference>
<dbReference type="GO" id="GO:0043531">
    <property type="term" value="F:ADP binding"/>
    <property type="evidence" value="ECO:0000318"/>
    <property type="project" value="GO_Central"/>
</dbReference>
<dbReference type="GO" id="GO:0005524">
    <property type="term" value="F:ATP binding"/>
    <property type="evidence" value="ECO:0000318"/>
    <property type="project" value="GO_Central"/>
</dbReference>
<dbReference type="GO" id="GO:0046933">
    <property type="term" value="F:proton-transporting ATP synthase activity, rotational mechanism"/>
    <property type="evidence" value="ECO:0007669"/>
    <property type="project" value="UniProtKB-UniRule"/>
</dbReference>
<dbReference type="GO" id="GO:0015986">
    <property type="term" value="P:proton motive force-driven ATP synthesis"/>
    <property type="evidence" value="ECO:0000318"/>
    <property type="project" value="GO_Central"/>
</dbReference>
<dbReference type="CDD" id="cd18113">
    <property type="entry name" value="ATP-synt_F1_alpha_C"/>
    <property type="match status" value="1"/>
</dbReference>
<dbReference type="CDD" id="cd18116">
    <property type="entry name" value="ATP-synt_F1_alpha_N"/>
    <property type="match status" value="1"/>
</dbReference>
<dbReference type="CDD" id="cd01132">
    <property type="entry name" value="F1-ATPase_alpha_CD"/>
    <property type="match status" value="1"/>
</dbReference>
<dbReference type="FunFam" id="1.20.150.20:FF:000001">
    <property type="entry name" value="ATP synthase subunit alpha"/>
    <property type="match status" value="1"/>
</dbReference>
<dbReference type="FunFam" id="2.40.30.20:FF:000001">
    <property type="entry name" value="ATP synthase subunit alpha"/>
    <property type="match status" value="1"/>
</dbReference>
<dbReference type="FunFam" id="3.40.50.300:FF:000002">
    <property type="entry name" value="ATP synthase subunit alpha"/>
    <property type="match status" value="1"/>
</dbReference>
<dbReference type="Gene3D" id="2.40.30.20">
    <property type="match status" value="1"/>
</dbReference>
<dbReference type="Gene3D" id="1.20.150.20">
    <property type="entry name" value="ATP synthase alpha/beta chain, C-terminal domain"/>
    <property type="match status" value="1"/>
</dbReference>
<dbReference type="Gene3D" id="3.40.50.300">
    <property type="entry name" value="P-loop containing nucleotide triphosphate hydrolases"/>
    <property type="match status" value="1"/>
</dbReference>
<dbReference type="HAMAP" id="MF_01346">
    <property type="entry name" value="ATP_synth_alpha_bact"/>
    <property type="match status" value="1"/>
</dbReference>
<dbReference type="InterPro" id="IPR023366">
    <property type="entry name" value="ATP_synth_asu-like_sf"/>
</dbReference>
<dbReference type="InterPro" id="IPR000793">
    <property type="entry name" value="ATP_synth_asu_C"/>
</dbReference>
<dbReference type="InterPro" id="IPR038376">
    <property type="entry name" value="ATP_synth_asu_C_sf"/>
</dbReference>
<dbReference type="InterPro" id="IPR033732">
    <property type="entry name" value="ATP_synth_F1_a_nt-bd_dom"/>
</dbReference>
<dbReference type="InterPro" id="IPR005294">
    <property type="entry name" value="ATP_synth_F1_asu"/>
</dbReference>
<dbReference type="InterPro" id="IPR020003">
    <property type="entry name" value="ATPase_a/bsu_AS"/>
</dbReference>
<dbReference type="InterPro" id="IPR004100">
    <property type="entry name" value="ATPase_F1/V1/A1_a/bsu_N"/>
</dbReference>
<dbReference type="InterPro" id="IPR036121">
    <property type="entry name" value="ATPase_F1/V1/A1_a/bsu_N_sf"/>
</dbReference>
<dbReference type="InterPro" id="IPR000194">
    <property type="entry name" value="ATPase_F1/V1/A1_a/bsu_nucl-bd"/>
</dbReference>
<dbReference type="InterPro" id="IPR027417">
    <property type="entry name" value="P-loop_NTPase"/>
</dbReference>
<dbReference type="NCBIfam" id="TIGR00962">
    <property type="entry name" value="atpA"/>
    <property type="match status" value="1"/>
</dbReference>
<dbReference type="NCBIfam" id="NF009884">
    <property type="entry name" value="PRK13343.1"/>
    <property type="match status" value="1"/>
</dbReference>
<dbReference type="PANTHER" id="PTHR48082">
    <property type="entry name" value="ATP SYNTHASE SUBUNIT ALPHA, MITOCHONDRIAL"/>
    <property type="match status" value="1"/>
</dbReference>
<dbReference type="PANTHER" id="PTHR48082:SF2">
    <property type="entry name" value="ATP SYNTHASE SUBUNIT ALPHA, MITOCHONDRIAL"/>
    <property type="match status" value="1"/>
</dbReference>
<dbReference type="Pfam" id="PF00006">
    <property type="entry name" value="ATP-synt_ab"/>
    <property type="match status" value="1"/>
</dbReference>
<dbReference type="Pfam" id="PF00306">
    <property type="entry name" value="ATP-synt_ab_C"/>
    <property type="match status" value="1"/>
</dbReference>
<dbReference type="Pfam" id="PF02874">
    <property type="entry name" value="ATP-synt_ab_N"/>
    <property type="match status" value="1"/>
</dbReference>
<dbReference type="PIRSF" id="PIRSF039088">
    <property type="entry name" value="F_ATPase_subunit_alpha"/>
    <property type="match status" value="1"/>
</dbReference>
<dbReference type="SUPFAM" id="SSF47917">
    <property type="entry name" value="C-terminal domain of alpha and beta subunits of F1 ATP synthase"/>
    <property type="match status" value="1"/>
</dbReference>
<dbReference type="SUPFAM" id="SSF50615">
    <property type="entry name" value="N-terminal domain of alpha and beta subunits of F1 ATP synthase"/>
    <property type="match status" value="1"/>
</dbReference>
<dbReference type="SUPFAM" id="SSF52540">
    <property type="entry name" value="P-loop containing nucleoside triphosphate hydrolases"/>
    <property type="match status" value="1"/>
</dbReference>
<dbReference type="PROSITE" id="PS00152">
    <property type="entry name" value="ATPASE_ALPHA_BETA"/>
    <property type="match status" value="1"/>
</dbReference>
<protein>
    <recommendedName>
        <fullName evidence="2">ATP synthase subunit alpha</fullName>
        <ecNumber evidence="2">7.1.2.2</ecNumber>
    </recommendedName>
    <alternativeName>
        <fullName evidence="2">ATP synthase F1 sector subunit alpha</fullName>
    </alternativeName>
    <alternativeName>
        <fullName evidence="2">F-ATPase subunit alpha</fullName>
    </alternativeName>
</protein>
<accession>P27179</accession>
<gene>
    <name evidence="2" type="primary">atpA</name>
    <name type="ordered locus">sll1326</name>
</gene>
<organism>
    <name type="scientific">Synechocystis sp. (strain ATCC 27184 / PCC 6803 / Kazusa)</name>
    <dbReference type="NCBI Taxonomy" id="1111708"/>
    <lineage>
        <taxon>Bacteria</taxon>
        <taxon>Bacillati</taxon>
        <taxon>Cyanobacteriota</taxon>
        <taxon>Cyanophyceae</taxon>
        <taxon>Synechococcales</taxon>
        <taxon>Merismopediaceae</taxon>
        <taxon>Synechocystis</taxon>
    </lineage>
</organism>
<proteinExistence type="inferred from homology"/>
<comment type="function">
    <text evidence="2">Produces ATP from ADP in the presence of a proton gradient across the membrane. The alpha chain is a regulatory subunit.</text>
</comment>
<comment type="catalytic activity">
    <reaction evidence="2">
        <text>ATP + H2O + 4 H(+)(in) = ADP + phosphate + 5 H(+)(out)</text>
        <dbReference type="Rhea" id="RHEA:57720"/>
        <dbReference type="ChEBI" id="CHEBI:15377"/>
        <dbReference type="ChEBI" id="CHEBI:15378"/>
        <dbReference type="ChEBI" id="CHEBI:30616"/>
        <dbReference type="ChEBI" id="CHEBI:43474"/>
        <dbReference type="ChEBI" id="CHEBI:456216"/>
        <dbReference type="EC" id="7.1.2.2"/>
    </reaction>
</comment>
<comment type="subunit">
    <text evidence="1">F-type ATPases have 2 components, CF(1) - the catalytic core - and CF(0) - the membrane proton channel. CF(1) has five subunits: alpha(3), beta(3), gamma(1), delta(1), epsilon(1). CF(0) has four main subunits: a(1), b(1), b'(1) and c(9-12) (By similarity).</text>
</comment>
<comment type="subcellular location">
    <subcellularLocation>
        <location evidence="2">Cellular thylakoid membrane</location>
        <topology evidence="2">Peripheral membrane protein</topology>
    </subcellularLocation>
</comment>
<comment type="similarity">
    <text evidence="2">Belongs to the ATPase alpha/beta chains family.</text>
</comment>
<name>ATPA_SYNY3</name>
<keyword id="KW-0066">ATP synthesis</keyword>
<keyword id="KW-0067">ATP-binding</keyword>
<keyword id="KW-0139">CF(1)</keyword>
<keyword id="KW-0375">Hydrogen ion transport</keyword>
<keyword id="KW-0406">Ion transport</keyword>
<keyword id="KW-0472">Membrane</keyword>
<keyword id="KW-0547">Nucleotide-binding</keyword>
<keyword id="KW-1185">Reference proteome</keyword>
<keyword id="KW-0793">Thylakoid</keyword>
<keyword id="KW-1278">Translocase</keyword>
<keyword id="KW-0813">Transport</keyword>
<reference key="1">
    <citation type="journal article" date="1991" name="Plant Mol. Biol.">
        <title>The atp1 and atp2 operons of the cyanobacterium Synechocystis sp. PCC 6803.</title>
        <authorList>
            <person name="Lill H."/>
            <person name="Nelson N."/>
        </authorList>
    </citation>
    <scope>NUCLEOTIDE SEQUENCE [GENOMIC DNA]</scope>
</reference>
<reference key="2">
    <citation type="journal article" date="1996" name="DNA Res.">
        <title>Sequence analysis of the genome of the unicellular cyanobacterium Synechocystis sp. strain PCC6803. II. Sequence determination of the entire genome and assignment of potential protein-coding regions.</title>
        <authorList>
            <person name="Kaneko T."/>
            <person name="Sato S."/>
            <person name="Kotani H."/>
            <person name="Tanaka A."/>
            <person name="Asamizu E."/>
            <person name="Nakamura Y."/>
            <person name="Miyajima N."/>
            <person name="Hirosawa M."/>
            <person name="Sugiura M."/>
            <person name="Sasamoto S."/>
            <person name="Kimura T."/>
            <person name="Hosouchi T."/>
            <person name="Matsuno A."/>
            <person name="Muraki A."/>
            <person name="Nakazaki N."/>
            <person name="Naruo K."/>
            <person name="Okumura S."/>
            <person name="Shimpo S."/>
            <person name="Takeuchi C."/>
            <person name="Wada T."/>
            <person name="Watanabe A."/>
            <person name="Yamada M."/>
            <person name="Yasuda M."/>
            <person name="Tabata S."/>
        </authorList>
    </citation>
    <scope>NUCLEOTIDE SEQUENCE [LARGE SCALE GENOMIC DNA]</scope>
    <source>
        <strain>ATCC 27184 / PCC 6803 / Kazusa</strain>
    </source>
</reference>
<sequence>MVSIRPDEISSIIRQQIESYDQSVQVSNVGTVLQVGDGTARIYGLEQVMSQELLEFEDGTIGIALNLEEDNVGAVLMGDGFGIQEGSTVKTTGQIAQIPIGDAMVGRVVDSLGRPIDGKGPISSTATRLLESPAPGIIERKSVCEPMQTGITAIDAMIPIGRGQRELIIGDRKTGKTAIAIDTIINQKSEDVICVYVAIGQKASTVAQIIDTLTEKGAMAYTIVVAANANDPATLQYLAPYTGATLAEHFMYQGKSTLVIYDDLSKQAQAYRQMSLLMRRPPGREAYPGDVFYIHSRLLERAAKLSDALGGGSMTALPVIETQAGDVSAYIPTNVISITDGQIFLSTDLFNAGFRPAINAGISVSRVGSAAQTKAMKKVAGKLKLELAQFAELEAFSQFASDLDAATQAQLARGQRLRQLLKQPENSPLSVWEQVAISYAGLNGYIDTIPVDKVTEFAQGLRDYLKANKAKYVEIINSSKALTDEAETLLKEGIKEFTQGFAA</sequence>